<protein>
    <recommendedName>
        <fullName>Arginine repressor</fullName>
    </recommendedName>
    <alternativeName>
        <fullName>Arginine hydroxamate resistance protein</fullName>
    </alternativeName>
</protein>
<organism>
    <name type="scientific">Bacillus subtilis (strain 168)</name>
    <dbReference type="NCBI Taxonomy" id="224308"/>
    <lineage>
        <taxon>Bacteria</taxon>
        <taxon>Bacillati</taxon>
        <taxon>Bacillota</taxon>
        <taxon>Bacilli</taxon>
        <taxon>Bacillales</taxon>
        <taxon>Bacillaceae</taxon>
        <taxon>Bacillus</taxon>
    </lineage>
</organism>
<keyword id="KW-0002">3D-structure</keyword>
<keyword id="KW-0028">Amino-acid biosynthesis</keyword>
<keyword id="KW-0055">Arginine biosynthesis</keyword>
<keyword id="KW-0056">Arginine metabolism</keyword>
<keyword id="KW-0963">Cytoplasm</keyword>
<keyword id="KW-0903">Direct protein sequencing</keyword>
<keyword id="KW-0238">DNA-binding</keyword>
<keyword id="KW-1185">Reference proteome</keyword>
<keyword id="KW-0678">Repressor</keyword>
<keyword id="KW-0804">Transcription</keyword>
<keyword id="KW-0805">Transcription regulation</keyword>
<evidence type="ECO:0000305" key="1"/>
<evidence type="ECO:0007829" key="2">
    <source>
        <dbReference type="PDB" id="2P5K"/>
    </source>
</evidence>
<evidence type="ECO:0007829" key="3">
    <source>
        <dbReference type="PDB" id="2P5M"/>
    </source>
</evidence>
<feature type="chain" id="PRO_0000205072" description="Arginine repressor">
    <location>
        <begin position="1"/>
        <end position="149"/>
    </location>
</feature>
<feature type="helix" evidence="2">
    <location>
        <begin position="3"/>
        <end position="16"/>
    </location>
</feature>
<feature type="helix" evidence="2">
    <location>
        <begin position="22"/>
        <end position="31"/>
    </location>
</feature>
<feature type="helix" evidence="2">
    <location>
        <begin position="38"/>
        <end position="48"/>
    </location>
</feature>
<feature type="strand" evidence="2">
    <location>
        <begin position="51"/>
        <end position="55"/>
    </location>
</feature>
<feature type="turn" evidence="2">
    <location>
        <begin position="56"/>
        <end position="58"/>
    </location>
</feature>
<feature type="strand" evidence="2">
    <location>
        <begin position="59"/>
        <end position="63"/>
    </location>
</feature>
<feature type="helix" evidence="3">
    <location>
        <begin position="72"/>
        <end position="83"/>
    </location>
</feature>
<feature type="strand" evidence="3">
    <location>
        <begin position="84"/>
        <end position="90"/>
    </location>
</feature>
<feature type="strand" evidence="3">
    <location>
        <begin position="93"/>
        <end position="99"/>
    </location>
</feature>
<feature type="helix" evidence="3">
    <location>
        <begin position="103"/>
        <end position="111"/>
    </location>
</feature>
<feature type="strand" evidence="3">
    <location>
        <begin position="120"/>
        <end position="123"/>
    </location>
</feature>
<feature type="strand" evidence="3">
    <location>
        <begin position="125"/>
        <end position="131"/>
    </location>
</feature>
<feature type="helix" evidence="3">
    <location>
        <begin position="135"/>
        <end position="146"/>
    </location>
</feature>
<reference key="1">
    <citation type="journal article" date="1989" name="Gene">
        <title>Nucleotide sequence of a Bacillus subtilis arginine regulatory gene and homology of its product to the Escherichia coli arginine repressor.</title>
        <authorList>
            <person name="North A.K."/>
            <person name="Smith M.C.M."/>
            <person name="Baumberg S."/>
        </authorList>
    </citation>
    <scope>NUCLEOTIDE SEQUENCE [GENOMIC DNA]</scope>
</reference>
<reference key="2">
    <citation type="journal article" date="1996" name="Microbiology">
        <title>Systematic sequencing of the 283 kb 210 degrees-232 degrees region of the Bacillus subtilis genome containing the skin element and many sporulation genes.</title>
        <authorList>
            <person name="Mizuno M."/>
            <person name="Masuda S."/>
            <person name="Takemaru K."/>
            <person name="Hosono S."/>
            <person name="Sato T."/>
            <person name="Takeuchi M."/>
            <person name="Kobayashi Y."/>
        </authorList>
    </citation>
    <scope>NUCLEOTIDE SEQUENCE [GENOMIC DNA]</scope>
    <source>
        <strain>168 / JH642</strain>
    </source>
</reference>
<reference key="3">
    <citation type="journal article" date="1997" name="Nature">
        <title>The complete genome sequence of the Gram-positive bacterium Bacillus subtilis.</title>
        <authorList>
            <person name="Kunst F."/>
            <person name="Ogasawara N."/>
            <person name="Moszer I."/>
            <person name="Albertini A.M."/>
            <person name="Alloni G."/>
            <person name="Azevedo V."/>
            <person name="Bertero M.G."/>
            <person name="Bessieres P."/>
            <person name="Bolotin A."/>
            <person name="Borchert S."/>
            <person name="Borriss R."/>
            <person name="Boursier L."/>
            <person name="Brans A."/>
            <person name="Braun M."/>
            <person name="Brignell S.C."/>
            <person name="Bron S."/>
            <person name="Brouillet S."/>
            <person name="Bruschi C.V."/>
            <person name="Caldwell B."/>
            <person name="Capuano V."/>
            <person name="Carter N.M."/>
            <person name="Choi S.-K."/>
            <person name="Codani J.-J."/>
            <person name="Connerton I.F."/>
            <person name="Cummings N.J."/>
            <person name="Daniel R.A."/>
            <person name="Denizot F."/>
            <person name="Devine K.M."/>
            <person name="Duesterhoeft A."/>
            <person name="Ehrlich S.D."/>
            <person name="Emmerson P.T."/>
            <person name="Entian K.-D."/>
            <person name="Errington J."/>
            <person name="Fabret C."/>
            <person name="Ferrari E."/>
            <person name="Foulger D."/>
            <person name="Fritz C."/>
            <person name="Fujita M."/>
            <person name="Fujita Y."/>
            <person name="Fuma S."/>
            <person name="Galizzi A."/>
            <person name="Galleron N."/>
            <person name="Ghim S.-Y."/>
            <person name="Glaser P."/>
            <person name="Goffeau A."/>
            <person name="Golightly E.J."/>
            <person name="Grandi G."/>
            <person name="Guiseppi G."/>
            <person name="Guy B.J."/>
            <person name="Haga K."/>
            <person name="Haiech J."/>
            <person name="Harwood C.R."/>
            <person name="Henaut A."/>
            <person name="Hilbert H."/>
            <person name="Holsappel S."/>
            <person name="Hosono S."/>
            <person name="Hullo M.-F."/>
            <person name="Itaya M."/>
            <person name="Jones L.-M."/>
            <person name="Joris B."/>
            <person name="Karamata D."/>
            <person name="Kasahara Y."/>
            <person name="Klaerr-Blanchard M."/>
            <person name="Klein C."/>
            <person name="Kobayashi Y."/>
            <person name="Koetter P."/>
            <person name="Koningstein G."/>
            <person name="Krogh S."/>
            <person name="Kumano M."/>
            <person name="Kurita K."/>
            <person name="Lapidus A."/>
            <person name="Lardinois S."/>
            <person name="Lauber J."/>
            <person name="Lazarevic V."/>
            <person name="Lee S.-M."/>
            <person name="Levine A."/>
            <person name="Liu H."/>
            <person name="Masuda S."/>
            <person name="Mauel C."/>
            <person name="Medigue C."/>
            <person name="Medina N."/>
            <person name="Mellado R.P."/>
            <person name="Mizuno M."/>
            <person name="Moestl D."/>
            <person name="Nakai S."/>
            <person name="Noback M."/>
            <person name="Noone D."/>
            <person name="O'Reilly M."/>
            <person name="Ogawa K."/>
            <person name="Ogiwara A."/>
            <person name="Oudega B."/>
            <person name="Park S.-H."/>
            <person name="Parro V."/>
            <person name="Pohl T.M."/>
            <person name="Portetelle D."/>
            <person name="Porwollik S."/>
            <person name="Prescott A.M."/>
            <person name="Presecan E."/>
            <person name="Pujic P."/>
            <person name="Purnelle B."/>
            <person name="Rapoport G."/>
            <person name="Rey M."/>
            <person name="Reynolds S."/>
            <person name="Rieger M."/>
            <person name="Rivolta C."/>
            <person name="Rocha E."/>
            <person name="Roche B."/>
            <person name="Rose M."/>
            <person name="Sadaie Y."/>
            <person name="Sato T."/>
            <person name="Scanlan E."/>
            <person name="Schleich S."/>
            <person name="Schroeter R."/>
            <person name="Scoffone F."/>
            <person name="Sekiguchi J."/>
            <person name="Sekowska A."/>
            <person name="Seror S.J."/>
            <person name="Serror P."/>
            <person name="Shin B.-S."/>
            <person name="Soldo B."/>
            <person name="Sorokin A."/>
            <person name="Tacconi E."/>
            <person name="Takagi T."/>
            <person name="Takahashi H."/>
            <person name="Takemaru K."/>
            <person name="Takeuchi M."/>
            <person name="Tamakoshi A."/>
            <person name="Tanaka T."/>
            <person name="Terpstra P."/>
            <person name="Tognoni A."/>
            <person name="Tosato V."/>
            <person name="Uchiyama S."/>
            <person name="Vandenbol M."/>
            <person name="Vannier F."/>
            <person name="Vassarotti A."/>
            <person name="Viari A."/>
            <person name="Wambutt R."/>
            <person name="Wedler E."/>
            <person name="Wedler H."/>
            <person name="Weitzenegger T."/>
            <person name="Winters P."/>
            <person name="Wipat A."/>
            <person name="Yamamoto H."/>
            <person name="Yamane K."/>
            <person name="Yasumoto K."/>
            <person name="Yata K."/>
            <person name="Yoshida K."/>
            <person name="Yoshikawa H.-F."/>
            <person name="Zumstein E."/>
            <person name="Yoshikawa H."/>
            <person name="Danchin A."/>
        </authorList>
    </citation>
    <scope>NUCLEOTIDE SEQUENCE [LARGE SCALE GENOMIC DNA]</scope>
    <source>
        <strain>168</strain>
    </source>
</reference>
<reference key="4">
    <citation type="journal article" date="1990" name="J. Bacteriol.">
        <title>Characterization of the spoIVB and recN loci of Bacillus subtilis.</title>
        <authorList>
            <person name="van Hoy B.E."/>
            <person name="Hoch J.A."/>
        </authorList>
    </citation>
    <scope>NUCLEOTIDE SEQUENCE [GENOMIC DNA] OF 120-149</scope>
</reference>
<reference key="5">
    <citation type="journal article" date="1992" name="Mol. Microbiol.">
        <title>Purification and initial characterization of AhrC: the regulator of arginine metabolism genes in Bacillus subtilis.</title>
        <authorList>
            <person name="Czaplewski L.G."/>
            <person name="North A.K."/>
            <person name="Smith M.C.M."/>
            <person name="Baumberg S."/>
            <person name="Stockley P.G."/>
        </authorList>
    </citation>
    <scope>PROTEIN SEQUENCE OF 1-30</scope>
</reference>
<reference key="6">
    <citation type="journal article" date="2002" name="Acta Crystallogr. D">
        <title>The structure of AhrC, the arginine repressor/activator protein from Bacillus subtilis.</title>
        <authorList>
            <person name="Dennis C.A."/>
            <person name="Glykos N.M."/>
            <person name="Parsons M.R."/>
            <person name="Phillips S.E."/>
        </authorList>
    </citation>
    <scope>X-RAY CRYSTALLOGRAPHY (2.7 ANGSTROMS)</scope>
</reference>
<name>ARGR_BACSU</name>
<proteinExistence type="evidence at protein level"/>
<dbReference type="EMBL" id="M27869">
    <property type="protein sequence ID" value="AAA22208.1"/>
    <property type="molecule type" value="Genomic_DNA"/>
</dbReference>
<dbReference type="EMBL" id="D84432">
    <property type="protein sequence ID" value="BAA12578.1"/>
    <property type="molecule type" value="Genomic_DNA"/>
</dbReference>
<dbReference type="EMBL" id="AL009126">
    <property type="protein sequence ID" value="CAB14356.1"/>
    <property type="molecule type" value="Genomic_DNA"/>
</dbReference>
<dbReference type="EMBL" id="M30297">
    <property type="protein sequence ID" value="AAA22690.1"/>
    <property type="molecule type" value="Genomic_DNA"/>
</dbReference>
<dbReference type="PIR" id="JS0275">
    <property type="entry name" value="JS0275"/>
</dbReference>
<dbReference type="RefSeq" id="NP_390305.1">
    <property type="nucleotide sequence ID" value="NC_000964.3"/>
</dbReference>
<dbReference type="RefSeq" id="WP_003230265.1">
    <property type="nucleotide sequence ID" value="NZ_OZ025638.1"/>
</dbReference>
<dbReference type="PDB" id="1F9N">
    <property type="method" value="X-ray"/>
    <property type="resolution" value="2.70 A"/>
    <property type="chains" value="A/B/C/D/E/F=1-149"/>
</dbReference>
<dbReference type="PDB" id="2P5K">
    <property type="method" value="X-ray"/>
    <property type="resolution" value="1.00 A"/>
    <property type="chains" value="A=1-64"/>
</dbReference>
<dbReference type="PDB" id="2P5L">
    <property type="method" value="X-ray"/>
    <property type="resolution" value="2.85 A"/>
    <property type="chains" value="C/D/G/H=1-64"/>
</dbReference>
<dbReference type="PDB" id="2P5M">
    <property type="method" value="X-ray"/>
    <property type="resolution" value="1.95 A"/>
    <property type="chains" value="A/B/C=67-149"/>
</dbReference>
<dbReference type="PDBsum" id="1F9N"/>
<dbReference type="PDBsum" id="2P5K"/>
<dbReference type="PDBsum" id="2P5L"/>
<dbReference type="PDBsum" id="2P5M"/>
<dbReference type="SMR" id="P17893"/>
<dbReference type="FunCoup" id="P17893">
    <property type="interactions" value="86"/>
</dbReference>
<dbReference type="STRING" id="224308.BSU24250"/>
<dbReference type="PaxDb" id="224308-BSU24250"/>
<dbReference type="EnsemblBacteria" id="CAB14356">
    <property type="protein sequence ID" value="CAB14356"/>
    <property type="gene ID" value="BSU_24250"/>
</dbReference>
<dbReference type="GeneID" id="86873028"/>
<dbReference type="GeneID" id="938653"/>
<dbReference type="KEGG" id="bsu:BSU24250"/>
<dbReference type="PATRIC" id="fig|224308.179.peg.2643"/>
<dbReference type="eggNOG" id="COG1438">
    <property type="taxonomic scope" value="Bacteria"/>
</dbReference>
<dbReference type="InParanoid" id="P17893"/>
<dbReference type="OrthoDB" id="9807089at2"/>
<dbReference type="PhylomeDB" id="P17893"/>
<dbReference type="BioCyc" id="BSUB:BSU24250-MONOMER"/>
<dbReference type="UniPathway" id="UPA00068"/>
<dbReference type="UniPathway" id="UPA00254"/>
<dbReference type="EvolutionaryTrace" id="P17893"/>
<dbReference type="Proteomes" id="UP000001570">
    <property type="component" value="Chromosome"/>
</dbReference>
<dbReference type="GO" id="GO:0005737">
    <property type="term" value="C:cytoplasm"/>
    <property type="evidence" value="ECO:0007669"/>
    <property type="project" value="UniProtKB-SubCell"/>
</dbReference>
<dbReference type="GO" id="GO:0005667">
    <property type="term" value="C:transcription regulator complex"/>
    <property type="evidence" value="ECO:0000318"/>
    <property type="project" value="GO_Central"/>
</dbReference>
<dbReference type="GO" id="GO:0034618">
    <property type="term" value="F:arginine binding"/>
    <property type="evidence" value="ECO:0007669"/>
    <property type="project" value="InterPro"/>
</dbReference>
<dbReference type="GO" id="GO:0000987">
    <property type="term" value="F:cis-regulatory region sequence-specific DNA binding"/>
    <property type="evidence" value="ECO:0000318"/>
    <property type="project" value="GO_Central"/>
</dbReference>
<dbReference type="GO" id="GO:0003700">
    <property type="term" value="F:DNA-binding transcription factor activity"/>
    <property type="evidence" value="ECO:0007669"/>
    <property type="project" value="UniProtKB-UniRule"/>
</dbReference>
<dbReference type="GO" id="GO:0019547">
    <property type="term" value="P:arginine catabolic process to ornithine"/>
    <property type="evidence" value="ECO:0007669"/>
    <property type="project" value="UniProtKB-UniPathway"/>
</dbReference>
<dbReference type="GO" id="GO:0006526">
    <property type="term" value="P:L-arginine biosynthetic process"/>
    <property type="evidence" value="ECO:0007669"/>
    <property type="project" value="UniProtKB-UniPathway"/>
</dbReference>
<dbReference type="GO" id="GO:0051259">
    <property type="term" value="P:protein complex oligomerization"/>
    <property type="evidence" value="ECO:0007669"/>
    <property type="project" value="InterPro"/>
</dbReference>
<dbReference type="GO" id="GO:1900079">
    <property type="term" value="P:regulation of arginine biosynthetic process"/>
    <property type="evidence" value="ECO:0007669"/>
    <property type="project" value="UniProtKB-UniRule"/>
</dbReference>
<dbReference type="GO" id="GO:0000821">
    <property type="term" value="P:regulation of arginine metabolic process"/>
    <property type="evidence" value="ECO:0000318"/>
    <property type="project" value="GO_Central"/>
</dbReference>
<dbReference type="FunFam" id="3.30.1360.40:FF:000006">
    <property type="entry name" value="Arginine repressor"/>
    <property type="match status" value="1"/>
</dbReference>
<dbReference type="Gene3D" id="3.30.1360.40">
    <property type="match status" value="1"/>
</dbReference>
<dbReference type="Gene3D" id="1.10.10.10">
    <property type="entry name" value="Winged helix-like DNA-binding domain superfamily/Winged helix DNA-binding domain"/>
    <property type="match status" value="1"/>
</dbReference>
<dbReference type="HAMAP" id="MF_00173">
    <property type="entry name" value="Arg_repressor"/>
    <property type="match status" value="1"/>
</dbReference>
<dbReference type="InterPro" id="IPR001669">
    <property type="entry name" value="Arg_repress"/>
</dbReference>
<dbReference type="InterPro" id="IPR020899">
    <property type="entry name" value="Arg_repress_C"/>
</dbReference>
<dbReference type="InterPro" id="IPR036251">
    <property type="entry name" value="Arg_repress_C_sf"/>
</dbReference>
<dbReference type="InterPro" id="IPR020900">
    <property type="entry name" value="Arg_repress_DNA-bd"/>
</dbReference>
<dbReference type="InterPro" id="IPR036388">
    <property type="entry name" value="WH-like_DNA-bd_sf"/>
</dbReference>
<dbReference type="InterPro" id="IPR036390">
    <property type="entry name" value="WH_DNA-bd_sf"/>
</dbReference>
<dbReference type="NCBIfam" id="TIGR01529">
    <property type="entry name" value="argR_whole"/>
    <property type="match status" value="1"/>
</dbReference>
<dbReference type="NCBIfam" id="NF003281">
    <property type="entry name" value="PRK04280.1"/>
    <property type="match status" value="1"/>
</dbReference>
<dbReference type="PANTHER" id="PTHR34471">
    <property type="entry name" value="ARGININE REPRESSOR"/>
    <property type="match status" value="1"/>
</dbReference>
<dbReference type="PANTHER" id="PTHR34471:SF1">
    <property type="entry name" value="ARGININE REPRESSOR"/>
    <property type="match status" value="1"/>
</dbReference>
<dbReference type="Pfam" id="PF01316">
    <property type="entry name" value="Arg_repressor"/>
    <property type="match status" value="1"/>
</dbReference>
<dbReference type="Pfam" id="PF02863">
    <property type="entry name" value="Arg_repressor_C"/>
    <property type="match status" value="1"/>
</dbReference>
<dbReference type="PRINTS" id="PR01467">
    <property type="entry name" value="ARGREPRESSOR"/>
</dbReference>
<dbReference type="SUPFAM" id="SSF55252">
    <property type="entry name" value="C-terminal domain of arginine repressor"/>
    <property type="match status" value="1"/>
</dbReference>
<dbReference type="SUPFAM" id="SSF46785">
    <property type="entry name" value="Winged helix' DNA-binding domain"/>
    <property type="match status" value="1"/>
</dbReference>
<sequence length="149" mass="16832">MNKGQRHIKIREIITSNEIETQDELVDMLKQDGYKVTQATVSRDIKELHLVKVPTNNGSYKYSLPADQRFNPLSKLKRALMDAFVKIDSASHMIVLKTMPGNAQAIGALMDNLDWDEMMGTICGDDTILIICRTPEDTEGVKNRLLELL</sequence>
<accession>P17893</accession>
<comment type="function">
    <text>Represses the synthesis of biosynthetic enzymes and activates the arginine catabolism. Controls the transcription of the two operons rocABC and rocDEF.</text>
</comment>
<comment type="pathway">
    <text>Amino-acid biosynthesis; L-arginine biosynthesis [regulation].</text>
</comment>
<comment type="pathway">
    <text>Amino-acid degradation; L-arginine degradation via ADI pathway.</text>
</comment>
<comment type="subunit">
    <text>Homohexamer.</text>
</comment>
<comment type="subcellular location">
    <subcellularLocation>
        <location>Cytoplasm</location>
    </subcellularLocation>
</comment>
<comment type="similarity">
    <text evidence="1">Belongs to the ArgR family.</text>
</comment>
<gene>
    <name type="primary">argR</name>
    <name type="synonym">ahrC</name>
    <name type="ordered locus">BSU24250</name>
</gene>